<name>RF1_STAA3</name>
<protein>
    <recommendedName>
        <fullName evidence="1">Peptide chain release factor 1</fullName>
        <shortName evidence="1">RF-1</shortName>
    </recommendedName>
</protein>
<reference key="1">
    <citation type="journal article" date="2006" name="Lancet">
        <title>Complete genome sequence of USA300, an epidemic clone of community-acquired meticillin-resistant Staphylococcus aureus.</title>
        <authorList>
            <person name="Diep B.A."/>
            <person name="Gill S.R."/>
            <person name="Chang R.F."/>
            <person name="Phan T.H."/>
            <person name="Chen J.H."/>
            <person name="Davidson M.G."/>
            <person name="Lin F."/>
            <person name="Lin J."/>
            <person name="Carleton H.A."/>
            <person name="Mongodin E.F."/>
            <person name="Sensabaugh G.F."/>
            <person name="Perdreau-Remington F."/>
        </authorList>
    </citation>
    <scope>NUCLEOTIDE SEQUENCE [LARGE SCALE GENOMIC DNA]</scope>
    <source>
        <strain>USA300</strain>
    </source>
</reference>
<sequence length="358" mass="40350">MFDQLDIVEERYEQLNELLSDPDVVNDSDKLRKYSKEQADLQKTVDVYRNYKAKKEELADIEEMLSETDDKEEVEMLKEESNGIKAELPNLEEELKILLIPKDPNDDKDVIVEIRAAAGGDEAAIFAGDLMRMYSKYAESQGFKTEIVEASESDHGGYKEISFSVSGNGAYSKLKFENGAHRVQRVPETESGGRIHTSTATVAVLPEVEDVEIEIRNEDLKIDTYRSSGAGGQHVNTTDSAVRITHLPTGVIATSSEKSQIQNREKAMKVLKARLYDMKVQEEQQKYASQRKSAVGTGDRSERIRTYNYPQSRVTDHRIGLTLQKLGQIMEGHLEEIIDALTLSEQTDKLKELNNGEL</sequence>
<accession>Q2FF10</accession>
<feature type="chain" id="PRO_0000263360" description="Peptide chain release factor 1">
    <location>
        <begin position="1"/>
        <end position="358"/>
    </location>
</feature>
<feature type="modified residue" description="N5-methylglutamine" evidence="1">
    <location>
        <position position="233"/>
    </location>
</feature>
<organism>
    <name type="scientific">Staphylococcus aureus (strain USA300)</name>
    <dbReference type="NCBI Taxonomy" id="367830"/>
    <lineage>
        <taxon>Bacteria</taxon>
        <taxon>Bacillati</taxon>
        <taxon>Bacillota</taxon>
        <taxon>Bacilli</taxon>
        <taxon>Bacillales</taxon>
        <taxon>Staphylococcaceae</taxon>
        <taxon>Staphylococcus</taxon>
    </lineage>
</organism>
<dbReference type="EMBL" id="CP000255">
    <property type="protein sequence ID" value="ABD21283.1"/>
    <property type="molecule type" value="Genomic_DNA"/>
</dbReference>
<dbReference type="RefSeq" id="WP_000460242.1">
    <property type="nucleotide sequence ID" value="NZ_CP027476.1"/>
</dbReference>
<dbReference type="SMR" id="Q2FF10"/>
<dbReference type="KEGG" id="saa:SAUSA300_2072"/>
<dbReference type="HOGENOM" id="CLU_036856_0_1_9"/>
<dbReference type="OMA" id="DHRVGFK"/>
<dbReference type="Proteomes" id="UP000001939">
    <property type="component" value="Chromosome"/>
</dbReference>
<dbReference type="GO" id="GO:0005737">
    <property type="term" value="C:cytoplasm"/>
    <property type="evidence" value="ECO:0007669"/>
    <property type="project" value="UniProtKB-SubCell"/>
</dbReference>
<dbReference type="GO" id="GO:0016149">
    <property type="term" value="F:translation release factor activity, codon specific"/>
    <property type="evidence" value="ECO:0007669"/>
    <property type="project" value="UniProtKB-UniRule"/>
</dbReference>
<dbReference type="FunFam" id="3.30.160.20:FF:000004">
    <property type="entry name" value="Peptide chain release factor 1"/>
    <property type="match status" value="1"/>
</dbReference>
<dbReference type="FunFam" id="3.30.70.1660:FF:000002">
    <property type="entry name" value="Peptide chain release factor 1"/>
    <property type="match status" value="1"/>
</dbReference>
<dbReference type="FunFam" id="3.30.70.1660:FF:000004">
    <property type="entry name" value="Peptide chain release factor 1"/>
    <property type="match status" value="1"/>
</dbReference>
<dbReference type="Gene3D" id="3.30.160.20">
    <property type="match status" value="1"/>
</dbReference>
<dbReference type="Gene3D" id="3.30.70.1660">
    <property type="match status" value="1"/>
</dbReference>
<dbReference type="Gene3D" id="6.10.140.1950">
    <property type="match status" value="1"/>
</dbReference>
<dbReference type="HAMAP" id="MF_00093">
    <property type="entry name" value="Rel_fac_1"/>
    <property type="match status" value="1"/>
</dbReference>
<dbReference type="InterPro" id="IPR005139">
    <property type="entry name" value="PCRF"/>
</dbReference>
<dbReference type="InterPro" id="IPR000352">
    <property type="entry name" value="Pep_chain_release_fac_I"/>
</dbReference>
<dbReference type="InterPro" id="IPR045853">
    <property type="entry name" value="Pep_chain_release_fac_I_sf"/>
</dbReference>
<dbReference type="InterPro" id="IPR050057">
    <property type="entry name" value="Prokaryotic/Mito_RF"/>
</dbReference>
<dbReference type="InterPro" id="IPR004373">
    <property type="entry name" value="RF-1"/>
</dbReference>
<dbReference type="NCBIfam" id="TIGR00019">
    <property type="entry name" value="prfA"/>
    <property type="match status" value="1"/>
</dbReference>
<dbReference type="NCBIfam" id="NF001859">
    <property type="entry name" value="PRK00591.1"/>
    <property type="match status" value="1"/>
</dbReference>
<dbReference type="PANTHER" id="PTHR43804">
    <property type="entry name" value="LD18447P"/>
    <property type="match status" value="1"/>
</dbReference>
<dbReference type="PANTHER" id="PTHR43804:SF7">
    <property type="entry name" value="LD18447P"/>
    <property type="match status" value="1"/>
</dbReference>
<dbReference type="Pfam" id="PF03462">
    <property type="entry name" value="PCRF"/>
    <property type="match status" value="1"/>
</dbReference>
<dbReference type="Pfam" id="PF00472">
    <property type="entry name" value="RF-1"/>
    <property type="match status" value="1"/>
</dbReference>
<dbReference type="SMART" id="SM00937">
    <property type="entry name" value="PCRF"/>
    <property type="match status" value="1"/>
</dbReference>
<dbReference type="SUPFAM" id="SSF75620">
    <property type="entry name" value="Release factor"/>
    <property type="match status" value="1"/>
</dbReference>
<dbReference type="PROSITE" id="PS00745">
    <property type="entry name" value="RF_PROK_I"/>
    <property type="match status" value="1"/>
</dbReference>
<evidence type="ECO:0000255" key="1">
    <source>
        <dbReference type="HAMAP-Rule" id="MF_00093"/>
    </source>
</evidence>
<gene>
    <name evidence="1" type="primary">prfA</name>
    <name type="ordered locus">SAUSA300_2072</name>
</gene>
<keyword id="KW-0963">Cytoplasm</keyword>
<keyword id="KW-0488">Methylation</keyword>
<keyword id="KW-0648">Protein biosynthesis</keyword>
<proteinExistence type="inferred from homology"/>
<comment type="function">
    <text evidence="1">Peptide chain release factor 1 directs the termination of translation in response to the peptide chain termination codons UAG and UAA.</text>
</comment>
<comment type="subcellular location">
    <subcellularLocation>
        <location evidence="1">Cytoplasm</location>
    </subcellularLocation>
</comment>
<comment type="PTM">
    <text evidence="1">Methylated by PrmC. Methylation increases the termination efficiency of RF1.</text>
</comment>
<comment type="similarity">
    <text evidence="1">Belongs to the prokaryotic/mitochondrial release factor family.</text>
</comment>